<sequence length="764" mass="85489">MGSNLSPQLCLMPFILGLLSGGVTTTPLSLARSQGSCSLEGIEIKGGSFRLLQDGQALEYVCPSGFYPYPVQTRTCRSTGSWSTLQTQDQKTVKKAECRAIHCPRPHDFENGEYWPRSPYYNVSDEISFHCYDGYTLRGSANRTCQVNGRWSGQTAICDNGAGYCSNPGIPIGTRKVGSQYRLEDSVTYHCSRGLTLRGSQRRTCQEGGSWSGTEPSCQDSFMYDTPQEVAEAFLSSLTETIEGVDAEDGHGPGEQQKRKIVLDPSGSMNIYLVLDGSDSIGAGNFTGAKKCLVNLIEKVASYGVKPRYGLVTYATYPKIWVKVSEPDSSNADWVTKQLNEINYEDHKLKSGTNTKKALQAVYSMMSWPDDIPPEGWNRTRHVIILMTDGLHNMGGDPITVIDEIRDLLYIGKDRKNPREDYLDVYVFGVGPLVNQVNINALASKKDNEQHVFKVKDMENLEDVFFQMIDESQSLSLCGMVWEHRKGTDYHKQPWQAKISVTRPSKGHESCMGAVVSEYFVLTAAHCFTVDDKEHSIKVSVGGKKQDLEIEEVLFHPNYNINGKKEAGIPEFYDYDVALIKLKNKLNYRQTIRPICLPCTEGTTRALRLPPTTTCQQQKEELLPAQDIKALFVSEEEKKLTRKEVYIKNGDKKGSCERDAQYAPGYDKVKDISEVVTPRFLCTGGVSPYADPNTCRGDSGGPLIVHKRSRFIQVGVISWGVVDVCKNQKRQKQVPAHARDFHINLFQVLPWLKQKLQDEDLGFL</sequence>
<protein>
    <recommendedName>
        <fullName>Complement factor B</fullName>
        <ecNumber evidence="1">3.4.21.47</ecNumber>
    </recommendedName>
    <alternativeName>
        <fullName>C3/C5 convertase</fullName>
    </alternativeName>
    <component>
        <recommendedName>
            <fullName>Complement factor B Ba</fullName>
        </recommendedName>
    </component>
    <component>
        <recommendedName>
            <fullName>Complement factor B Bb</fullName>
        </recommendedName>
    </component>
</protein>
<evidence type="ECO:0000250" key="1">
    <source>
        <dbReference type="UniProtKB" id="P00751"/>
    </source>
</evidence>
<evidence type="ECO:0000255" key="2"/>
<evidence type="ECO:0000255" key="3">
    <source>
        <dbReference type="PROSITE-ProRule" id="PRU00219"/>
    </source>
</evidence>
<evidence type="ECO:0000255" key="4">
    <source>
        <dbReference type="PROSITE-ProRule" id="PRU00274"/>
    </source>
</evidence>
<evidence type="ECO:0000255" key="5">
    <source>
        <dbReference type="PROSITE-ProRule" id="PRU00302"/>
    </source>
</evidence>
<accession>Q864W1</accession>
<organism>
    <name type="scientific">Pongo pygmaeus</name>
    <name type="common">Bornean orangutan</name>
    <dbReference type="NCBI Taxonomy" id="9600"/>
    <lineage>
        <taxon>Eukaryota</taxon>
        <taxon>Metazoa</taxon>
        <taxon>Chordata</taxon>
        <taxon>Craniata</taxon>
        <taxon>Vertebrata</taxon>
        <taxon>Euteleostomi</taxon>
        <taxon>Mammalia</taxon>
        <taxon>Eutheria</taxon>
        <taxon>Euarchontoglires</taxon>
        <taxon>Primates</taxon>
        <taxon>Haplorrhini</taxon>
        <taxon>Catarrhini</taxon>
        <taxon>Hominidae</taxon>
        <taxon>Pongo</taxon>
    </lineage>
</organism>
<comment type="function">
    <text evidence="1">Precursor of the catalytic component of the C3 and C5 convertase complexes of the alternative pathway of the complement system, a cascade of proteins that leads to phagocytosis and breakdown of pathogens and signaling that strengthens the adaptive immune system. The alternative complement pathway acts as an amplification loop that enhances other complement pathways (classical, lectin and GZMK) by promoting formation of additional C3 and C5 convertases. CFB is cleaved and activated by CFD to generate Ba and Bb chains; Bb chain constituting the catalytic component of the C3 and C5 convertases.</text>
</comment>
<comment type="function">
    <molecule>Complement factor B Bb</molecule>
    <text evidence="1">Serine protease component of the complement C3 and C5 convertase complexes of the alternative complement pathway. Following cleavage and activation by factor D (CFD), forms the C3 convertase together with complement C3b. As part of the C3 convertase, cleaves and activates C3 into C3a anaphylatoxin and C3b opsonin, the next components of the complement pathways. When an additional complement C3b molecule binds to the C3 convertase, forms the C5 convertase, which cleaves and activates C5 into C5a anaphylatoxin and C5b component of the membrane attack complex.</text>
</comment>
<comment type="function">
    <molecule>Complement factor B Ba</molecule>
    <text evidence="1">Involved in proliferation and differentiation of preactivated B-lymphocytes, rapid spreading of peripheral blood monocytes, stimulation of lymphocyte blastogenesis and lysis of erythrocytes.</text>
</comment>
<comment type="catalytic activity">
    <molecule>Complement factor B Bb</molecule>
    <reaction evidence="1">
        <text>Cleavage of Arg-|-Ser bond in complement component C3 alpha-chain to yield C3a and C3b, and Arg-|-Xaa bond in complement component C5 alpha-chain to yield C5a and C5b.</text>
        <dbReference type="EC" id="3.4.21.47"/>
    </reaction>
</comment>
<comment type="cofactor">
    <molecule>Complement factor B Bb</molecule>
    <cofactor evidence="1">
        <name>Mg(2+)</name>
        <dbReference type="ChEBI" id="CHEBI:18420"/>
    </cofactor>
    <cofactor evidence="1">
        <name>Mn(2+)</name>
        <dbReference type="ChEBI" id="CHEBI:29035"/>
    </cofactor>
</comment>
<comment type="subunit">
    <text evidence="1">Monomer. Interacts with complement C3b; this interaction is dependent on the presence of Mg(2+).</text>
</comment>
<comment type="subunit">
    <molecule>Complement factor B Bb</molecule>
    <text evidence="1">Catalytic component of the C3 convertase of the alternative complement pathway, also named C3bBb, composed of complement factor B Bb and complement C3b. Catalytic component of the C5 convertase of the alternative complement pathway, also named C3bBb3b, composed of complement factor B Bb and additional molecules of complement C3b. Interacts to CFP; this interaction contributes to the stabilization of the active C3-convertase enzyme complex.</text>
</comment>
<comment type="subcellular location">
    <subcellularLocation>
        <location evidence="1">Secreted</location>
    </subcellularLocation>
</comment>
<comment type="subcellular location">
    <molecule>Complement factor B Bb</molecule>
    <subcellularLocation>
        <location evidence="1">Cell surface</location>
    </subcellularLocation>
    <text evidence="1">Recruited to the surface of pathogens by complement C3b opsonin.</text>
</comment>
<comment type="domain">
    <text evidence="1">The unliganded VWA domain has an inactive 'locked' conformation whereby the scissile Arg-259|Lys-260 bond is protected from proteolytic activation.</text>
</comment>
<comment type="PTM">
    <text evidence="1">Cleaved by CFD following activation of the alternative complement system, generating Ba and Bb chains. Cleavage and activation takes place when CFB is already associated with complement C3b.</text>
</comment>
<comment type="similarity">
    <text evidence="4">Belongs to the peptidase S1 family.</text>
</comment>
<keyword id="KW-0165">Cleavage on pair of basic residues</keyword>
<keyword id="KW-0179">Complement alternate pathway</keyword>
<keyword id="KW-1015">Disulfide bond</keyword>
<keyword id="KW-0325">Glycoprotein</keyword>
<keyword id="KW-0378">Hydrolase</keyword>
<keyword id="KW-0391">Immunity</keyword>
<keyword id="KW-0399">Innate immunity</keyword>
<keyword id="KW-0460">Magnesium</keyword>
<keyword id="KW-0479">Metal-binding</keyword>
<keyword id="KW-0645">Protease</keyword>
<keyword id="KW-0677">Repeat</keyword>
<keyword id="KW-0964">Secreted</keyword>
<keyword id="KW-0720">Serine protease</keyword>
<keyword id="KW-0732">Signal</keyword>
<keyword id="KW-0768">Sushi</keyword>
<keyword id="KW-0865">Zymogen</keyword>
<gene>
    <name type="primary">CFB</name>
    <name type="synonym">BF</name>
</gene>
<proteinExistence type="inferred from homology"/>
<name>CFAB_PONPY</name>
<dbReference type="EC" id="3.4.21.47" evidence="1"/>
<dbReference type="EMBL" id="AY074662">
    <property type="protein sequence ID" value="AAM10003.1"/>
    <property type="molecule type" value="Genomic_DNA"/>
</dbReference>
<dbReference type="SMR" id="Q864W1"/>
<dbReference type="MEROPS" id="S01.196"/>
<dbReference type="GlyCosmos" id="Q864W1">
    <property type="glycosylation" value="4 sites, No reported glycans"/>
</dbReference>
<dbReference type="GO" id="GO:0070062">
    <property type="term" value="C:extracellular exosome"/>
    <property type="evidence" value="ECO:0007669"/>
    <property type="project" value="TreeGrafter"/>
</dbReference>
<dbReference type="GO" id="GO:0004252">
    <property type="term" value="F:serine-type endopeptidase activity"/>
    <property type="evidence" value="ECO:0007669"/>
    <property type="project" value="UniProtKB-EC"/>
</dbReference>
<dbReference type="GO" id="GO:0006957">
    <property type="term" value="P:complement activation, alternative pathway"/>
    <property type="evidence" value="ECO:0007669"/>
    <property type="project" value="UniProtKB-KW"/>
</dbReference>
<dbReference type="GO" id="GO:0006508">
    <property type="term" value="P:proteolysis"/>
    <property type="evidence" value="ECO:0007669"/>
    <property type="project" value="UniProtKB-KW"/>
</dbReference>
<dbReference type="GO" id="GO:0009617">
    <property type="term" value="P:response to bacterium"/>
    <property type="evidence" value="ECO:0007669"/>
    <property type="project" value="TreeGrafter"/>
</dbReference>
<dbReference type="CDD" id="cd00033">
    <property type="entry name" value="CCP"/>
    <property type="match status" value="3"/>
</dbReference>
<dbReference type="CDD" id="cd00190">
    <property type="entry name" value="Tryp_SPc"/>
    <property type="match status" value="1"/>
</dbReference>
<dbReference type="CDD" id="cd01470">
    <property type="entry name" value="vWA_complement_factors"/>
    <property type="match status" value="1"/>
</dbReference>
<dbReference type="FunFam" id="2.10.70.10:FF:000052">
    <property type="entry name" value="Complement factor B"/>
    <property type="match status" value="1"/>
</dbReference>
<dbReference type="FunFam" id="2.40.10.120:FF:000009">
    <property type="entry name" value="Complement factor B"/>
    <property type="match status" value="1"/>
</dbReference>
<dbReference type="FunFam" id="3.40.50.410:FF:000056">
    <property type="entry name" value="Complement factor B"/>
    <property type="match status" value="1"/>
</dbReference>
<dbReference type="FunFam" id="2.10.70.10:FF:000019">
    <property type="entry name" value="Complement factor b,-like"/>
    <property type="match status" value="2"/>
</dbReference>
<dbReference type="Gene3D" id="2.40.10.120">
    <property type="match status" value="1"/>
</dbReference>
<dbReference type="Gene3D" id="2.10.70.10">
    <property type="entry name" value="Complement Module, domain 1"/>
    <property type="match status" value="3"/>
</dbReference>
<dbReference type="Gene3D" id="3.40.50.410">
    <property type="entry name" value="von Willebrand factor, type A domain"/>
    <property type="match status" value="1"/>
</dbReference>
<dbReference type="InterPro" id="IPR011360">
    <property type="entry name" value="Compl_C2_B"/>
</dbReference>
<dbReference type="InterPro" id="IPR009003">
    <property type="entry name" value="Peptidase_S1_PA"/>
</dbReference>
<dbReference type="InterPro" id="IPR001314">
    <property type="entry name" value="Peptidase_S1A"/>
</dbReference>
<dbReference type="InterPro" id="IPR035976">
    <property type="entry name" value="Sushi/SCR/CCP_sf"/>
</dbReference>
<dbReference type="InterPro" id="IPR000436">
    <property type="entry name" value="Sushi_SCR_CCP_dom"/>
</dbReference>
<dbReference type="InterPro" id="IPR001254">
    <property type="entry name" value="Trypsin_dom"/>
</dbReference>
<dbReference type="InterPro" id="IPR018114">
    <property type="entry name" value="TRYPSIN_HIS"/>
</dbReference>
<dbReference type="InterPro" id="IPR033116">
    <property type="entry name" value="TRYPSIN_SER"/>
</dbReference>
<dbReference type="InterPro" id="IPR002035">
    <property type="entry name" value="VWF_A"/>
</dbReference>
<dbReference type="InterPro" id="IPR036465">
    <property type="entry name" value="vWFA_dom_sf"/>
</dbReference>
<dbReference type="PANTHER" id="PTHR46393:SF1">
    <property type="entry name" value="COMPLEMENT FACTOR B"/>
    <property type="match status" value="1"/>
</dbReference>
<dbReference type="PANTHER" id="PTHR46393">
    <property type="entry name" value="SUSHI DOMAIN-CONTAINING PROTEIN"/>
    <property type="match status" value="1"/>
</dbReference>
<dbReference type="Pfam" id="PF00084">
    <property type="entry name" value="Sushi"/>
    <property type="match status" value="3"/>
</dbReference>
<dbReference type="Pfam" id="PF00089">
    <property type="entry name" value="Trypsin"/>
    <property type="match status" value="1"/>
</dbReference>
<dbReference type="Pfam" id="PF00092">
    <property type="entry name" value="VWA"/>
    <property type="match status" value="1"/>
</dbReference>
<dbReference type="PIRSF" id="PIRSF001154">
    <property type="entry name" value="Compl_C2_B"/>
    <property type="match status" value="1"/>
</dbReference>
<dbReference type="PRINTS" id="PR00722">
    <property type="entry name" value="CHYMOTRYPSIN"/>
</dbReference>
<dbReference type="PRINTS" id="PR00453">
    <property type="entry name" value="VWFADOMAIN"/>
</dbReference>
<dbReference type="SMART" id="SM00032">
    <property type="entry name" value="CCP"/>
    <property type="match status" value="3"/>
</dbReference>
<dbReference type="SMART" id="SM00020">
    <property type="entry name" value="Tryp_SPc"/>
    <property type="match status" value="1"/>
</dbReference>
<dbReference type="SMART" id="SM00327">
    <property type="entry name" value="VWA"/>
    <property type="match status" value="1"/>
</dbReference>
<dbReference type="SUPFAM" id="SSF57535">
    <property type="entry name" value="Complement control module/SCR domain"/>
    <property type="match status" value="3"/>
</dbReference>
<dbReference type="SUPFAM" id="SSF50494">
    <property type="entry name" value="Trypsin-like serine proteases"/>
    <property type="match status" value="1"/>
</dbReference>
<dbReference type="SUPFAM" id="SSF53300">
    <property type="entry name" value="vWA-like"/>
    <property type="match status" value="1"/>
</dbReference>
<dbReference type="PROSITE" id="PS50923">
    <property type="entry name" value="SUSHI"/>
    <property type="match status" value="3"/>
</dbReference>
<dbReference type="PROSITE" id="PS50240">
    <property type="entry name" value="TRYPSIN_DOM"/>
    <property type="match status" value="1"/>
</dbReference>
<dbReference type="PROSITE" id="PS00134">
    <property type="entry name" value="TRYPSIN_HIS"/>
    <property type="match status" value="1"/>
</dbReference>
<dbReference type="PROSITE" id="PS00135">
    <property type="entry name" value="TRYPSIN_SER"/>
    <property type="match status" value="1"/>
</dbReference>
<dbReference type="PROSITE" id="PS50234">
    <property type="entry name" value="VWFA"/>
    <property type="match status" value="1"/>
</dbReference>
<feature type="signal peptide" evidence="1">
    <location>
        <begin position="1"/>
        <end position="25"/>
    </location>
</feature>
<feature type="chain" id="PRO_0000027554" description="Complement factor B">
    <location>
        <begin position="26"/>
        <end position="764"/>
    </location>
</feature>
<feature type="chain" id="PRO_0000027555" description="Complement factor B Ba">
    <location>
        <begin position="26"/>
        <end position="259"/>
    </location>
</feature>
<feature type="chain" id="PRO_0000027556" description="Complement factor B Bb">
    <location>
        <begin position="260"/>
        <end position="764"/>
    </location>
</feature>
<feature type="domain" description="Sushi 1" evidence="5">
    <location>
        <begin position="35"/>
        <end position="100"/>
    </location>
</feature>
<feature type="domain" description="Sushi 2" evidence="5">
    <location>
        <begin position="101"/>
        <end position="160"/>
    </location>
</feature>
<feature type="domain" description="Sushi 3" evidence="5">
    <location>
        <begin position="163"/>
        <end position="220"/>
    </location>
</feature>
<feature type="domain" description="VWFA" evidence="3">
    <location>
        <begin position="270"/>
        <end position="469"/>
    </location>
</feature>
<feature type="domain" description="Peptidase S1" evidence="4">
    <location>
        <begin position="477"/>
        <end position="757"/>
    </location>
</feature>
<feature type="active site" description="Charge relay system" evidence="4">
    <location>
        <position position="526"/>
    </location>
</feature>
<feature type="active site" description="Charge relay system" evidence="4">
    <location>
        <position position="576"/>
    </location>
</feature>
<feature type="active site" description="Charge relay system" evidence="4">
    <location>
        <position position="699"/>
    </location>
</feature>
<feature type="binding site" evidence="1">
    <location>
        <position position="278"/>
    </location>
    <ligand>
        <name>Mg(2+)</name>
        <dbReference type="ChEBI" id="CHEBI:18420"/>
    </ligand>
</feature>
<feature type="binding site" evidence="1">
    <location>
        <position position="280"/>
    </location>
    <ligand>
        <name>Mg(2+)</name>
        <dbReference type="ChEBI" id="CHEBI:18420"/>
    </ligand>
</feature>
<feature type="binding site" evidence="1">
    <location>
        <position position="353"/>
    </location>
    <ligand>
        <name>Mg(2+)</name>
        <dbReference type="ChEBI" id="CHEBI:18420"/>
    </ligand>
</feature>
<feature type="site" description="Cleavage; by CFD" evidence="1">
    <location>
        <begin position="259"/>
        <end position="260"/>
    </location>
</feature>
<feature type="glycosylation site" description="N-linked (GlcNAc...) asparagine" evidence="2">
    <location>
        <position position="122"/>
    </location>
</feature>
<feature type="glycosylation site" description="N-linked (GlcNAc...) asparagine" evidence="2">
    <location>
        <position position="142"/>
    </location>
</feature>
<feature type="glycosylation site" description="N-linked (GlcNAc...) asparagine" evidence="2">
    <location>
        <position position="285"/>
    </location>
</feature>
<feature type="glycosylation site" description="N-linked (GlcNAc...) asparagine" evidence="2">
    <location>
        <position position="378"/>
    </location>
</feature>
<feature type="disulfide bond" evidence="4">
    <location>
        <begin position="37"/>
        <end position="76"/>
    </location>
</feature>
<feature type="disulfide bond" evidence="4">
    <location>
        <begin position="62"/>
        <end position="98"/>
    </location>
</feature>
<feature type="disulfide bond" evidence="4">
    <location>
        <begin position="103"/>
        <end position="145"/>
    </location>
</feature>
<feature type="disulfide bond" evidence="4">
    <location>
        <begin position="131"/>
        <end position="158"/>
    </location>
</feature>
<feature type="disulfide bond" evidence="4">
    <location>
        <begin position="165"/>
        <end position="205"/>
    </location>
</feature>
<feature type="disulfide bond" evidence="4">
    <location>
        <begin position="191"/>
        <end position="218"/>
    </location>
</feature>
<feature type="disulfide bond" evidence="1">
    <location>
        <begin position="478"/>
        <end position="596"/>
    </location>
</feature>
<feature type="disulfide bond" evidence="4">
    <location>
        <begin position="511"/>
        <end position="527"/>
    </location>
</feature>
<feature type="disulfide bond" evidence="1">
    <location>
        <begin position="599"/>
        <end position="615"/>
    </location>
</feature>
<feature type="disulfide bond" evidence="1">
    <location>
        <begin position="656"/>
        <end position="682"/>
    </location>
</feature>
<feature type="disulfide bond" evidence="4">
    <location>
        <begin position="695"/>
        <end position="725"/>
    </location>
</feature>
<reference key="1">
    <citation type="submission" date="2002-01" db="EMBL/GenBank/DDBJ databases">
        <title>Comparative analysis of human and primate complement C2 and factor B genes.</title>
        <authorList>
            <person name="Schneider P.M."/>
            <person name="Tantalaki E."/>
            <person name="Stradmann-Bellinghausen B."/>
            <person name="Rittner C."/>
        </authorList>
    </citation>
    <scope>NUCLEOTIDE SEQUENCE [GENOMIC DNA]</scope>
</reference>